<keyword id="KW-0496">Mitochondrion</keyword>
<keyword id="KW-0560">Oxidoreductase</keyword>
<keyword id="KW-1185">Reference proteome</keyword>
<keyword id="KW-0809">Transit peptide</keyword>
<evidence type="ECO:0000250" key="1">
    <source>
        <dbReference type="UniProtKB" id="Q8IWW8"/>
    </source>
</evidence>
<evidence type="ECO:0000250" key="2">
    <source>
        <dbReference type="UniProtKB" id="Q8R0N6"/>
    </source>
</evidence>
<evidence type="ECO:0000255" key="3"/>
<evidence type="ECO:0000305" key="4"/>
<evidence type="ECO:0000312" key="5">
    <source>
        <dbReference type="WormBase" id="CBG02769"/>
    </source>
</evidence>
<name>HOT_CAEBR</name>
<protein>
    <recommendedName>
        <fullName evidence="1">Hydroxyacid-oxoacid transhydrogenase, mitochondrial</fullName>
        <shortName>HOT</shortName>
        <ecNumber evidence="1">1.1.99.24</ecNumber>
    </recommendedName>
    <alternativeName>
        <fullName evidence="5">3-Hydroxypropionate-oxoacid transhydrogenase</fullName>
    </alternativeName>
</protein>
<comment type="function">
    <text evidence="1">Catalyzes the cofactor-independent reversible oxidation of gamma-hydroxybutyrate (GHB) to succinic semialdehyde (SSA) coupled to reduction of 2-ketoglutarate (2-KG) to D-2-hydroxyglutarate (D-2-HG). L-3-hydroxybutyrate (L-3-OHB) is also a substrate for HOT when using 2-KG as hydrogen acceptor, resulting in the formation of D-2-HG.</text>
</comment>
<comment type="catalytic activity">
    <reaction evidence="1">
        <text>(S)-3-hydroxybutanoate + 2-oxoglutarate = (R)-2-hydroxyglutarate + acetoacetate</text>
        <dbReference type="Rhea" id="RHEA:23048"/>
        <dbReference type="ChEBI" id="CHEBI:11047"/>
        <dbReference type="ChEBI" id="CHEBI:13705"/>
        <dbReference type="ChEBI" id="CHEBI:15801"/>
        <dbReference type="ChEBI" id="CHEBI:16810"/>
        <dbReference type="EC" id="1.1.99.24"/>
    </reaction>
</comment>
<comment type="catalytic activity">
    <reaction evidence="1">
        <text>4-hydroxybutanoate + 2-oxoglutarate = (R)-2-hydroxyglutarate + succinate semialdehyde</text>
        <dbReference type="Rhea" id="RHEA:24734"/>
        <dbReference type="ChEBI" id="CHEBI:15801"/>
        <dbReference type="ChEBI" id="CHEBI:16724"/>
        <dbReference type="ChEBI" id="CHEBI:16810"/>
        <dbReference type="ChEBI" id="CHEBI:57706"/>
        <dbReference type="EC" id="1.1.99.24"/>
    </reaction>
</comment>
<comment type="subcellular location">
    <subcellularLocation>
        <location evidence="2">Mitochondrion</location>
    </subcellularLocation>
</comment>
<comment type="similarity">
    <text evidence="4">Belongs to the iron-containing alcohol dehydrogenase family. Hydroxyacid-oxoacid transhydrogenase subfamily.</text>
</comment>
<organism>
    <name type="scientific">Caenorhabditis briggsae</name>
    <dbReference type="NCBI Taxonomy" id="6238"/>
    <lineage>
        <taxon>Eukaryota</taxon>
        <taxon>Metazoa</taxon>
        <taxon>Ecdysozoa</taxon>
        <taxon>Nematoda</taxon>
        <taxon>Chromadorea</taxon>
        <taxon>Rhabditida</taxon>
        <taxon>Rhabditina</taxon>
        <taxon>Rhabditomorpha</taxon>
        <taxon>Rhabditoidea</taxon>
        <taxon>Rhabditidae</taxon>
        <taxon>Peloderinae</taxon>
        <taxon>Caenorhabditis</taxon>
    </lineage>
</organism>
<gene>
    <name evidence="5" type="primary">hphd-1</name>
    <name evidence="5" type="ORF">CBG02769</name>
</gene>
<sequence length="465" mass="50702">MSASLARGMLHKMGGSCCPHHAPTTNPFRMAKLHGNNKSTDYAFEMVCSTLRFGKGVTLEIGYDVRNLGAKKTLLITDKNVQNTIAFKNAEQALKMVNIEYEIFDDVLIEPSEKSMQKAIAFAKSKPFDSFIAVGGGSVIDTTKAAALYASNPEADFLDFVGPPFGKSLQPKNPMLPLIAVPTTAGTGSETTAAAIMDLPEHKCKTGIRLRCIKPYLAVVDPLNVMSMPRNVAIYSGFDVLCHALESYTALPYDQRSPRPARPEVRPVYQGSNPISDVWSREALRIIGQYFRRSVFDPSDEEARTEMLKASSFAGIGFGNAGVHLCHGLSYPISSQAKGCVAHDYPQDKNLIPHGLSVMTTAVADFEFTTAACPDRHLVAAQTLGADIPNNADNEYISRTLCDQLRGFMKDFGVPNGLKGMGFEYSDIDHLTEAASHSVPNIVISPKSTDRDIISKLYEKSLTVY</sequence>
<accession>A8WTJ7</accession>
<reference key="1">
    <citation type="journal article" date="2003" name="PLoS Biol.">
        <title>The genome sequence of Caenorhabditis briggsae: a platform for comparative genomics.</title>
        <authorList>
            <person name="Stein L.D."/>
            <person name="Bao Z."/>
            <person name="Blasiar D."/>
            <person name="Blumenthal T."/>
            <person name="Brent M.R."/>
            <person name="Chen N."/>
            <person name="Chinwalla A."/>
            <person name="Clarke L."/>
            <person name="Clee C."/>
            <person name="Coghlan A."/>
            <person name="Coulson A."/>
            <person name="D'Eustachio P."/>
            <person name="Fitch D.H.A."/>
            <person name="Fulton L.A."/>
            <person name="Fulton R.E."/>
            <person name="Griffiths-Jones S."/>
            <person name="Harris T.W."/>
            <person name="Hillier L.W."/>
            <person name="Kamath R."/>
            <person name="Kuwabara P.E."/>
            <person name="Mardis E.R."/>
            <person name="Marra M.A."/>
            <person name="Miner T.L."/>
            <person name="Minx P."/>
            <person name="Mullikin J.C."/>
            <person name="Plumb R.W."/>
            <person name="Rogers J."/>
            <person name="Schein J.E."/>
            <person name="Sohrmann M."/>
            <person name="Spieth J."/>
            <person name="Stajich J.E."/>
            <person name="Wei C."/>
            <person name="Willey D."/>
            <person name="Wilson R.K."/>
            <person name="Durbin R.M."/>
            <person name="Waterston R.H."/>
        </authorList>
    </citation>
    <scope>NUCLEOTIDE SEQUENCE [LARGE SCALE GENOMIC DNA]</scope>
    <source>
        <strain>AF16</strain>
    </source>
</reference>
<feature type="transit peptide" description="Mitochondrion" evidence="3">
    <location>
        <begin position="1"/>
        <end status="unknown"/>
    </location>
</feature>
<feature type="chain" id="PRO_0000324755" description="Hydroxyacid-oxoacid transhydrogenase, mitochondrial">
    <location>
        <begin status="unknown"/>
        <end position="465"/>
    </location>
</feature>
<dbReference type="EC" id="1.1.99.24" evidence="1"/>
<dbReference type="EMBL" id="HE601438">
    <property type="protein sequence ID" value="CAP23809.1"/>
    <property type="molecule type" value="Genomic_DNA"/>
</dbReference>
<dbReference type="RefSeq" id="XP_002631017.1">
    <property type="nucleotide sequence ID" value="XM_002630971.1"/>
</dbReference>
<dbReference type="SMR" id="A8WTJ7"/>
<dbReference type="FunCoup" id="A8WTJ7">
    <property type="interactions" value="566"/>
</dbReference>
<dbReference type="STRING" id="6238.A8WTJ7"/>
<dbReference type="EnsemblMetazoa" id="CBG02769.1">
    <property type="protein sequence ID" value="CBG02769.1"/>
    <property type="gene ID" value="WBGene00025759"/>
</dbReference>
<dbReference type="GeneID" id="8572531"/>
<dbReference type="KEGG" id="cbr:CBG_02769"/>
<dbReference type="CTD" id="8572531"/>
<dbReference type="WormBase" id="CBG02769">
    <property type="protein sequence ID" value="CBP00579"/>
    <property type="gene ID" value="WBGene00025759"/>
    <property type="gene designation" value="Cbr-hphd-1"/>
</dbReference>
<dbReference type="eggNOG" id="KOG3857">
    <property type="taxonomic scope" value="Eukaryota"/>
</dbReference>
<dbReference type="HOGENOM" id="CLU_007207_0_7_1"/>
<dbReference type="InParanoid" id="A8WTJ7"/>
<dbReference type="OMA" id="NLMGAGC"/>
<dbReference type="Proteomes" id="UP000008549">
    <property type="component" value="Unassembled WGS sequence"/>
</dbReference>
<dbReference type="GO" id="GO:0005739">
    <property type="term" value="C:mitochondrion"/>
    <property type="evidence" value="ECO:0000250"/>
    <property type="project" value="UniProtKB"/>
</dbReference>
<dbReference type="GO" id="GO:0004022">
    <property type="term" value="F:alcohol dehydrogenase (NAD+) activity"/>
    <property type="evidence" value="ECO:0000318"/>
    <property type="project" value="GO_Central"/>
</dbReference>
<dbReference type="GO" id="GO:0047988">
    <property type="term" value="F:hydroxyacid-oxoacid transhydrogenase activity"/>
    <property type="evidence" value="ECO:0000250"/>
    <property type="project" value="UniProtKB"/>
</dbReference>
<dbReference type="GO" id="GO:0046872">
    <property type="term" value="F:metal ion binding"/>
    <property type="evidence" value="ECO:0007669"/>
    <property type="project" value="InterPro"/>
</dbReference>
<dbReference type="GO" id="GO:0019552">
    <property type="term" value="P:glutamate catabolic process via 2-hydroxyglutarate"/>
    <property type="evidence" value="ECO:0000250"/>
    <property type="project" value="UniProtKB"/>
</dbReference>
<dbReference type="CDD" id="cd08190">
    <property type="entry name" value="HOT"/>
    <property type="match status" value="1"/>
</dbReference>
<dbReference type="FunFam" id="3.40.50.1970:FF:000024">
    <property type="entry name" value="Hydroxyacid-oxoacid transhydrogenase, mitochondrial"/>
    <property type="match status" value="1"/>
</dbReference>
<dbReference type="FunFam" id="1.20.1090.10:FF:000003">
    <property type="entry name" value="Probable hydroxyacid-oxoacid transhydrogenase, mitochondrial"/>
    <property type="match status" value="1"/>
</dbReference>
<dbReference type="Gene3D" id="3.40.50.1970">
    <property type="match status" value="1"/>
</dbReference>
<dbReference type="Gene3D" id="1.20.1090.10">
    <property type="entry name" value="Dehydroquinate synthase-like - alpha domain"/>
    <property type="match status" value="1"/>
</dbReference>
<dbReference type="InterPro" id="IPR001670">
    <property type="entry name" value="ADH_Fe/GldA"/>
</dbReference>
<dbReference type="InterPro" id="IPR056798">
    <property type="entry name" value="ADH_Fe_C"/>
</dbReference>
<dbReference type="InterPro" id="IPR018211">
    <property type="entry name" value="ADH_Fe_CS"/>
</dbReference>
<dbReference type="InterPro" id="IPR039697">
    <property type="entry name" value="Alcohol_dehydrogenase_Fe"/>
</dbReference>
<dbReference type="InterPro" id="IPR042157">
    <property type="entry name" value="HOT"/>
</dbReference>
<dbReference type="PANTHER" id="PTHR11496">
    <property type="entry name" value="ALCOHOL DEHYDROGENASE"/>
    <property type="match status" value="1"/>
</dbReference>
<dbReference type="PANTHER" id="PTHR11496:SF83">
    <property type="entry name" value="HYDROXYACID-OXOACID TRANSHYDROGENASE, MITOCHONDRIAL"/>
    <property type="match status" value="1"/>
</dbReference>
<dbReference type="Pfam" id="PF25137">
    <property type="entry name" value="ADH_Fe_C"/>
    <property type="match status" value="1"/>
</dbReference>
<dbReference type="Pfam" id="PF00465">
    <property type="entry name" value="Fe-ADH"/>
    <property type="match status" value="1"/>
</dbReference>
<dbReference type="SUPFAM" id="SSF56796">
    <property type="entry name" value="Dehydroquinate synthase-like"/>
    <property type="match status" value="1"/>
</dbReference>
<dbReference type="PROSITE" id="PS00913">
    <property type="entry name" value="ADH_IRON_1"/>
    <property type="match status" value="1"/>
</dbReference>
<proteinExistence type="inferred from homology"/>